<gene>
    <name evidence="1" type="primary">hslO</name>
    <name type="synonym">hsp33</name>
    <name type="ordered locus">glr2281</name>
</gene>
<accession>Q7NIA2</accession>
<reference key="1">
    <citation type="journal article" date="2003" name="DNA Res.">
        <title>Complete genome structure of Gloeobacter violaceus PCC 7421, a cyanobacterium that lacks thylakoids.</title>
        <authorList>
            <person name="Nakamura Y."/>
            <person name="Kaneko T."/>
            <person name="Sato S."/>
            <person name="Mimuro M."/>
            <person name="Miyashita H."/>
            <person name="Tsuchiya T."/>
            <person name="Sasamoto S."/>
            <person name="Watanabe A."/>
            <person name="Kawashima K."/>
            <person name="Kishida Y."/>
            <person name="Kiyokawa C."/>
            <person name="Kohara M."/>
            <person name="Matsumoto M."/>
            <person name="Matsuno A."/>
            <person name="Nakazaki N."/>
            <person name="Shimpo S."/>
            <person name="Takeuchi C."/>
            <person name="Yamada M."/>
            <person name="Tabata S."/>
        </authorList>
    </citation>
    <scope>NUCLEOTIDE SEQUENCE [LARGE SCALE GENOMIC DNA]</scope>
    <source>
        <strain>ATCC 29082 / PCC 7421</strain>
    </source>
</reference>
<protein>
    <recommendedName>
        <fullName evidence="1">33 kDa chaperonin</fullName>
    </recommendedName>
    <alternativeName>
        <fullName evidence="1">Heat shock protein 33 homolog</fullName>
        <shortName evidence="1">HSP33</shortName>
    </alternativeName>
</protein>
<sequence length="306" mass="32668">MADQLVRATAAQGRIRAVGVLSTRLTEEARGRHKLSYVATAALGRTMAAGLLIASNFKQTEARVNLRLQGDGPLGGILVDAGADGTVRGYVKNPQVELPPSPKGKLDVGRAVGANGFLYVVKDLGYGYPFSGTTELVSGEIGDDVTHYLVTSEQVASALMLGVFVGADGVDAAGGLLLQVMPSADGQEDEELAATLERRLASVEGFTPLVRSGKRIPQILEELLGDMGLEIFPEVQLVRFHCHCSPQRVLGALKMMGEAELLDMIEKDGGAEATCHFCNQVYQVKASELETLVEQLRSEREVSSQE</sequence>
<evidence type="ECO:0000255" key="1">
    <source>
        <dbReference type="HAMAP-Rule" id="MF_00117"/>
    </source>
</evidence>
<comment type="function">
    <text evidence="1">Redox regulated molecular chaperone. Protects both thermally unfolding and oxidatively damaged proteins from irreversible aggregation. Plays an important role in the bacterial defense system toward oxidative stress.</text>
</comment>
<comment type="subcellular location">
    <subcellularLocation>
        <location evidence="1">Cytoplasm</location>
    </subcellularLocation>
</comment>
<comment type="PTM">
    <text evidence="1">Under oxidizing conditions two disulfide bonds are formed involving the reactive cysteines. Under reducing conditions zinc is bound to the reactive cysteines and the protein is inactive.</text>
</comment>
<comment type="similarity">
    <text evidence="1">Belongs to the HSP33 family.</text>
</comment>
<name>HSLO_GLOVI</name>
<keyword id="KW-0143">Chaperone</keyword>
<keyword id="KW-0963">Cytoplasm</keyword>
<keyword id="KW-1015">Disulfide bond</keyword>
<keyword id="KW-0676">Redox-active center</keyword>
<keyword id="KW-1185">Reference proteome</keyword>
<keyword id="KW-0862">Zinc</keyword>
<organism>
    <name type="scientific">Gloeobacter violaceus (strain ATCC 29082 / PCC 7421)</name>
    <dbReference type="NCBI Taxonomy" id="251221"/>
    <lineage>
        <taxon>Bacteria</taxon>
        <taxon>Bacillati</taxon>
        <taxon>Cyanobacteriota</taxon>
        <taxon>Cyanophyceae</taxon>
        <taxon>Gloeobacterales</taxon>
        <taxon>Gloeobacteraceae</taxon>
        <taxon>Gloeobacter</taxon>
    </lineage>
</organism>
<proteinExistence type="inferred from homology"/>
<feature type="chain" id="PRO_0000192178" description="33 kDa chaperonin">
    <location>
        <begin position="1"/>
        <end position="306"/>
    </location>
</feature>
<feature type="disulfide bond" description="Redox-active" evidence="1">
    <location>
        <begin position="242"/>
        <end position="244"/>
    </location>
</feature>
<feature type="disulfide bond" description="Redox-active" evidence="1">
    <location>
        <begin position="275"/>
        <end position="278"/>
    </location>
</feature>
<dbReference type="EMBL" id="BA000045">
    <property type="protein sequence ID" value="BAC90222.1"/>
    <property type="molecule type" value="Genomic_DNA"/>
</dbReference>
<dbReference type="RefSeq" id="NP_925227.1">
    <property type="nucleotide sequence ID" value="NC_005125.1"/>
</dbReference>
<dbReference type="RefSeq" id="WP_011142278.1">
    <property type="nucleotide sequence ID" value="NC_005125.1"/>
</dbReference>
<dbReference type="SMR" id="Q7NIA2"/>
<dbReference type="STRING" id="251221.gene:10759776"/>
<dbReference type="EnsemblBacteria" id="BAC90222">
    <property type="protein sequence ID" value="BAC90222"/>
    <property type="gene ID" value="BAC90222"/>
</dbReference>
<dbReference type="KEGG" id="gvi:glr2281"/>
<dbReference type="PATRIC" id="fig|251221.4.peg.2316"/>
<dbReference type="eggNOG" id="COG1281">
    <property type="taxonomic scope" value="Bacteria"/>
</dbReference>
<dbReference type="HOGENOM" id="CLU_054493_1_0_3"/>
<dbReference type="InParanoid" id="Q7NIA2"/>
<dbReference type="OrthoDB" id="9776534at2"/>
<dbReference type="PhylomeDB" id="Q7NIA2"/>
<dbReference type="Proteomes" id="UP000000557">
    <property type="component" value="Chromosome"/>
</dbReference>
<dbReference type="GO" id="GO:0005737">
    <property type="term" value="C:cytoplasm"/>
    <property type="evidence" value="ECO:0000318"/>
    <property type="project" value="GO_Central"/>
</dbReference>
<dbReference type="GO" id="GO:0044183">
    <property type="term" value="F:protein folding chaperone"/>
    <property type="evidence" value="ECO:0000318"/>
    <property type="project" value="GO_Central"/>
</dbReference>
<dbReference type="GO" id="GO:0051082">
    <property type="term" value="F:unfolded protein binding"/>
    <property type="evidence" value="ECO:0007669"/>
    <property type="project" value="UniProtKB-UniRule"/>
</dbReference>
<dbReference type="GO" id="GO:0042026">
    <property type="term" value="P:protein refolding"/>
    <property type="evidence" value="ECO:0000318"/>
    <property type="project" value="GO_Central"/>
</dbReference>
<dbReference type="CDD" id="cd00498">
    <property type="entry name" value="Hsp33"/>
    <property type="match status" value="1"/>
</dbReference>
<dbReference type="Gene3D" id="3.55.30.10">
    <property type="entry name" value="Hsp33 domain"/>
    <property type="match status" value="1"/>
</dbReference>
<dbReference type="Gene3D" id="3.90.1280.10">
    <property type="entry name" value="HSP33 redox switch-like"/>
    <property type="match status" value="1"/>
</dbReference>
<dbReference type="HAMAP" id="MF_00117">
    <property type="entry name" value="HslO"/>
    <property type="match status" value="1"/>
</dbReference>
<dbReference type="InterPro" id="IPR000397">
    <property type="entry name" value="Heat_shock_Hsp33"/>
</dbReference>
<dbReference type="InterPro" id="IPR016154">
    <property type="entry name" value="Heat_shock_Hsp33_C"/>
</dbReference>
<dbReference type="InterPro" id="IPR016153">
    <property type="entry name" value="Heat_shock_Hsp33_N"/>
</dbReference>
<dbReference type="NCBIfam" id="NF001033">
    <property type="entry name" value="PRK00114.1"/>
    <property type="match status" value="1"/>
</dbReference>
<dbReference type="PANTHER" id="PTHR30111">
    <property type="entry name" value="33 KDA CHAPERONIN"/>
    <property type="match status" value="1"/>
</dbReference>
<dbReference type="PANTHER" id="PTHR30111:SF1">
    <property type="entry name" value="33 KDA CHAPERONIN"/>
    <property type="match status" value="1"/>
</dbReference>
<dbReference type="Pfam" id="PF01430">
    <property type="entry name" value="HSP33"/>
    <property type="match status" value="1"/>
</dbReference>
<dbReference type="PIRSF" id="PIRSF005261">
    <property type="entry name" value="Heat_shock_Hsp33"/>
    <property type="match status" value="1"/>
</dbReference>
<dbReference type="SUPFAM" id="SSF64397">
    <property type="entry name" value="Hsp33 domain"/>
    <property type="match status" value="1"/>
</dbReference>
<dbReference type="SUPFAM" id="SSF118352">
    <property type="entry name" value="HSP33 redox switch-like"/>
    <property type="match status" value="1"/>
</dbReference>